<proteinExistence type="inferred from homology"/>
<accession>A7FFH3</accession>
<dbReference type="EC" id="1.1.1.267" evidence="1"/>
<dbReference type="EMBL" id="CP000720">
    <property type="protein sequence ID" value="ABS47902.1"/>
    <property type="molecule type" value="Genomic_DNA"/>
</dbReference>
<dbReference type="SMR" id="A7FFH3"/>
<dbReference type="KEGG" id="ypi:YpsIP31758_1017"/>
<dbReference type="HOGENOM" id="CLU_035714_0_1_6"/>
<dbReference type="UniPathway" id="UPA00056">
    <property type="reaction ID" value="UER00092"/>
</dbReference>
<dbReference type="Proteomes" id="UP000002412">
    <property type="component" value="Chromosome"/>
</dbReference>
<dbReference type="GO" id="GO:0030604">
    <property type="term" value="F:1-deoxy-D-xylulose-5-phosphate reductoisomerase activity"/>
    <property type="evidence" value="ECO:0007669"/>
    <property type="project" value="UniProtKB-UniRule"/>
</dbReference>
<dbReference type="GO" id="GO:0030145">
    <property type="term" value="F:manganese ion binding"/>
    <property type="evidence" value="ECO:0007669"/>
    <property type="project" value="TreeGrafter"/>
</dbReference>
<dbReference type="GO" id="GO:0070402">
    <property type="term" value="F:NADPH binding"/>
    <property type="evidence" value="ECO:0007669"/>
    <property type="project" value="InterPro"/>
</dbReference>
<dbReference type="GO" id="GO:0051484">
    <property type="term" value="P:isopentenyl diphosphate biosynthetic process, methylerythritol 4-phosphate pathway involved in terpenoid biosynthetic process"/>
    <property type="evidence" value="ECO:0007669"/>
    <property type="project" value="TreeGrafter"/>
</dbReference>
<dbReference type="FunFam" id="1.10.1740.10:FF:000004">
    <property type="entry name" value="1-deoxy-D-xylulose 5-phosphate reductoisomerase"/>
    <property type="match status" value="1"/>
</dbReference>
<dbReference type="FunFam" id="3.40.50.720:FF:000045">
    <property type="entry name" value="1-deoxy-D-xylulose 5-phosphate reductoisomerase"/>
    <property type="match status" value="1"/>
</dbReference>
<dbReference type="Gene3D" id="1.10.1740.10">
    <property type="match status" value="1"/>
</dbReference>
<dbReference type="Gene3D" id="3.40.50.720">
    <property type="entry name" value="NAD(P)-binding Rossmann-like Domain"/>
    <property type="match status" value="1"/>
</dbReference>
<dbReference type="HAMAP" id="MF_00183">
    <property type="entry name" value="DXP_reductoisom"/>
    <property type="match status" value="1"/>
</dbReference>
<dbReference type="InterPro" id="IPR003821">
    <property type="entry name" value="DXP_reductoisomerase"/>
</dbReference>
<dbReference type="InterPro" id="IPR013644">
    <property type="entry name" value="DXP_reductoisomerase_C"/>
</dbReference>
<dbReference type="InterPro" id="IPR013512">
    <property type="entry name" value="DXP_reductoisomerase_N"/>
</dbReference>
<dbReference type="InterPro" id="IPR026877">
    <property type="entry name" value="DXPR_C"/>
</dbReference>
<dbReference type="InterPro" id="IPR036169">
    <property type="entry name" value="DXPR_C_sf"/>
</dbReference>
<dbReference type="InterPro" id="IPR036291">
    <property type="entry name" value="NAD(P)-bd_dom_sf"/>
</dbReference>
<dbReference type="NCBIfam" id="TIGR00243">
    <property type="entry name" value="Dxr"/>
    <property type="match status" value="1"/>
</dbReference>
<dbReference type="NCBIfam" id="NF003938">
    <property type="entry name" value="PRK05447.1-1"/>
    <property type="match status" value="1"/>
</dbReference>
<dbReference type="NCBIfam" id="NF009114">
    <property type="entry name" value="PRK12464.1"/>
    <property type="match status" value="1"/>
</dbReference>
<dbReference type="PANTHER" id="PTHR30525">
    <property type="entry name" value="1-DEOXY-D-XYLULOSE 5-PHOSPHATE REDUCTOISOMERASE"/>
    <property type="match status" value="1"/>
</dbReference>
<dbReference type="PANTHER" id="PTHR30525:SF0">
    <property type="entry name" value="1-DEOXY-D-XYLULOSE 5-PHOSPHATE REDUCTOISOMERASE, CHLOROPLASTIC"/>
    <property type="match status" value="1"/>
</dbReference>
<dbReference type="Pfam" id="PF08436">
    <property type="entry name" value="DXP_redisom_C"/>
    <property type="match status" value="1"/>
</dbReference>
<dbReference type="Pfam" id="PF02670">
    <property type="entry name" value="DXP_reductoisom"/>
    <property type="match status" value="1"/>
</dbReference>
<dbReference type="Pfam" id="PF13288">
    <property type="entry name" value="DXPR_C"/>
    <property type="match status" value="1"/>
</dbReference>
<dbReference type="PIRSF" id="PIRSF006205">
    <property type="entry name" value="Dxp_reductismrs"/>
    <property type="match status" value="1"/>
</dbReference>
<dbReference type="SUPFAM" id="SSF69055">
    <property type="entry name" value="1-deoxy-D-xylulose-5-phosphate reductoisomerase, C-terminal domain"/>
    <property type="match status" value="1"/>
</dbReference>
<dbReference type="SUPFAM" id="SSF55347">
    <property type="entry name" value="Glyceraldehyde-3-phosphate dehydrogenase-like, C-terminal domain"/>
    <property type="match status" value="1"/>
</dbReference>
<dbReference type="SUPFAM" id="SSF51735">
    <property type="entry name" value="NAD(P)-binding Rossmann-fold domains"/>
    <property type="match status" value="1"/>
</dbReference>
<reference key="1">
    <citation type="journal article" date="2007" name="PLoS Genet.">
        <title>The complete genome sequence of Yersinia pseudotuberculosis IP31758, the causative agent of Far East scarlet-like fever.</title>
        <authorList>
            <person name="Eppinger M."/>
            <person name="Rosovitz M.J."/>
            <person name="Fricke W.F."/>
            <person name="Rasko D.A."/>
            <person name="Kokorina G."/>
            <person name="Fayolle C."/>
            <person name="Lindler L.E."/>
            <person name="Carniel E."/>
            <person name="Ravel J."/>
        </authorList>
    </citation>
    <scope>NUCLEOTIDE SEQUENCE [LARGE SCALE GENOMIC DNA]</scope>
    <source>
        <strain>IP 31758</strain>
    </source>
</reference>
<sequence length="398" mass="43115">MKQLTILGSTGSIGNSTLSVVRANPELFKVTALVAGRNVREMAQQCLEFSPRYAAMSDEHSAKSLRLLLAEQGSDTEVYSGETAACELAALDDVDQVMAAIVGIAGLPSTLAAIRAGKQVLLANKESLITCGKLFMDEVKRSRAQLLPIDSEHNAIFQSLPERIQRQLGYSSLNENGVSRIILTGSGGPFRETPLSQFSDVTPDQACAHPNWSMGRKISVDSATMMNKGLEYIEARWLFNASAEQIEVVLHPQSVIHSMVRYHDGSILAQMGTPDMRTPIAHAMAYPMRVSSGVAPLDFCKVGALTFTTPDYQRYPCLKLAIDACNAGQAATTALNAANEISVMAFLDSKIRFTDIEVINRTVVEGLLLSEPTSVEEVLVIDRKARDVAAQVIAKLNN</sequence>
<comment type="function">
    <text evidence="1">Catalyzes the NADPH-dependent rearrangement and reduction of 1-deoxy-D-xylulose-5-phosphate (DXP) to 2-C-methyl-D-erythritol 4-phosphate (MEP).</text>
</comment>
<comment type="catalytic activity">
    <reaction evidence="1">
        <text>2-C-methyl-D-erythritol 4-phosphate + NADP(+) = 1-deoxy-D-xylulose 5-phosphate + NADPH + H(+)</text>
        <dbReference type="Rhea" id="RHEA:13717"/>
        <dbReference type="ChEBI" id="CHEBI:15378"/>
        <dbReference type="ChEBI" id="CHEBI:57783"/>
        <dbReference type="ChEBI" id="CHEBI:57792"/>
        <dbReference type="ChEBI" id="CHEBI:58262"/>
        <dbReference type="ChEBI" id="CHEBI:58349"/>
        <dbReference type="EC" id="1.1.1.267"/>
    </reaction>
    <physiologicalReaction direction="right-to-left" evidence="1">
        <dbReference type="Rhea" id="RHEA:13719"/>
    </physiologicalReaction>
</comment>
<comment type="cofactor">
    <cofactor evidence="1">
        <name>Mg(2+)</name>
        <dbReference type="ChEBI" id="CHEBI:18420"/>
    </cofactor>
    <cofactor evidence="1">
        <name>Mn(2+)</name>
        <dbReference type="ChEBI" id="CHEBI:29035"/>
    </cofactor>
</comment>
<comment type="pathway">
    <text evidence="1">Isoprenoid biosynthesis; isopentenyl diphosphate biosynthesis via DXP pathway; isopentenyl diphosphate from 1-deoxy-D-xylulose 5-phosphate: step 1/6.</text>
</comment>
<comment type="subunit">
    <text evidence="1">Homodimer.</text>
</comment>
<comment type="similarity">
    <text evidence="1">Belongs to the DXR family.</text>
</comment>
<keyword id="KW-0414">Isoprene biosynthesis</keyword>
<keyword id="KW-0464">Manganese</keyword>
<keyword id="KW-0479">Metal-binding</keyword>
<keyword id="KW-0521">NADP</keyword>
<keyword id="KW-0560">Oxidoreductase</keyword>
<gene>
    <name evidence="1" type="primary">dxr</name>
    <name type="ordered locus">YpsIP31758_1017</name>
</gene>
<feature type="chain" id="PRO_1000058420" description="1-deoxy-D-xylulose 5-phosphate reductoisomerase">
    <location>
        <begin position="1"/>
        <end position="398"/>
    </location>
</feature>
<feature type="binding site" evidence="1">
    <location>
        <position position="10"/>
    </location>
    <ligand>
        <name>NADPH</name>
        <dbReference type="ChEBI" id="CHEBI:57783"/>
    </ligand>
</feature>
<feature type="binding site" evidence="1">
    <location>
        <position position="11"/>
    </location>
    <ligand>
        <name>NADPH</name>
        <dbReference type="ChEBI" id="CHEBI:57783"/>
    </ligand>
</feature>
<feature type="binding site" evidence="1">
    <location>
        <position position="12"/>
    </location>
    <ligand>
        <name>NADPH</name>
        <dbReference type="ChEBI" id="CHEBI:57783"/>
    </ligand>
</feature>
<feature type="binding site" evidence="1">
    <location>
        <position position="13"/>
    </location>
    <ligand>
        <name>NADPH</name>
        <dbReference type="ChEBI" id="CHEBI:57783"/>
    </ligand>
</feature>
<feature type="binding site" evidence="1">
    <location>
        <position position="36"/>
    </location>
    <ligand>
        <name>NADPH</name>
        <dbReference type="ChEBI" id="CHEBI:57783"/>
    </ligand>
</feature>
<feature type="binding site" evidence="1">
    <location>
        <position position="37"/>
    </location>
    <ligand>
        <name>NADPH</name>
        <dbReference type="ChEBI" id="CHEBI:57783"/>
    </ligand>
</feature>
<feature type="binding site" evidence="1">
    <location>
        <position position="38"/>
    </location>
    <ligand>
        <name>NADPH</name>
        <dbReference type="ChEBI" id="CHEBI:57783"/>
    </ligand>
</feature>
<feature type="binding site" evidence="1">
    <location>
        <position position="124"/>
    </location>
    <ligand>
        <name>NADPH</name>
        <dbReference type="ChEBI" id="CHEBI:57783"/>
    </ligand>
</feature>
<feature type="binding site" evidence="1">
    <location>
        <position position="125"/>
    </location>
    <ligand>
        <name>1-deoxy-D-xylulose 5-phosphate</name>
        <dbReference type="ChEBI" id="CHEBI:57792"/>
    </ligand>
</feature>
<feature type="binding site" evidence="1">
    <location>
        <position position="126"/>
    </location>
    <ligand>
        <name>NADPH</name>
        <dbReference type="ChEBI" id="CHEBI:57783"/>
    </ligand>
</feature>
<feature type="binding site" evidence="1">
    <location>
        <position position="150"/>
    </location>
    <ligand>
        <name>Mn(2+)</name>
        <dbReference type="ChEBI" id="CHEBI:29035"/>
    </ligand>
</feature>
<feature type="binding site" evidence="1">
    <location>
        <position position="151"/>
    </location>
    <ligand>
        <name>1-deoxy-D-xylulose 5-phosphate</name>
        <dbReference type="ChEBI" id="CHEBI:57792"/>
    </ligand>
</feature>
<feature type="binding site" evidence="1">
    <location>
        <position position="152"/>
    </location>
    <ligand>
        <name>1-deoxy-D-xylulose 5-phosphate</name>
        <dbReference type="ChEBI" id="CHEBI:57792"/>
    </ligand>
</feature>
<feature type="binding site" evidence="1">
    <location>
        <position position="152"/>
    </location>
    <ligand>
        <name>Mn(2+)</name>
        <dbReference type="ChEBI" id="CHEBI:29035"/>
    </ligand>
</feature>
<feature type="binding site" evidence="1">
    <location>
        <position position="186"/>
    </location>
    <ligand>
        <name>1-deoxy-D-xylulose 5-phosphate</name>
        <dbReference type="ChEBI" id="CHEBI:57792"/>
    </ligand>
</feature>
<feature type="binding site" evidence="1">
    <location>
        <position position="209"/>
    </location>
    <ligand>
        <name>1-deoxy-D-xylulose 5-phosphate</name>
        <dbReference type="ChEBI" id="CHEBI:57792"/>
    </ligand>
</feature>
<feature type="binding site" evidence="1">
    <location>
        <position position="215"/>
    </location>
    <ligand>
        <name>NADPH</name>
        <dbReference type="ChEBI" id="CHEBI:57783"/>
    </ligand>
</feature>
<feature type="binding site" evidence="1">
    <location>
        <position position="222"/>
    </location>
    <ligand>
        <name>1-deoxy-D-xylulose 5-phosphate</name>
        <dbReference type="ChEBI" id="CHEBI:57792"/>
    </ligand>
</feature>
<feature type="binding site" evidence="1">
    <location>
        <position position="227"/>
    </location>
    <ligand>
        <name>1-deoxy-D-xylulose 5-phosphate</name>
        <dbReference type="ChEBI" id="CHEBI:57792"/>
    </ligand>
</feature>
<feature type="binding site" evidence="1">
    <location>
        <position position="228"/>
    </location>
    <ligand>
        <name>1-deoxy-D-xylulose 5-phosphate</name>
        <dbReference type="ChEBI" id="CHEBI:57792"/>
    </ligand>
</feature>
<feature type="binding site" evidence="1">
    <location>
        <position position="231"/>
    </location>
    <ligand>
        <name>1-deoxy-D-xylulose 5-phosphate</name>
        <dbReference type="ChEBI" id="CHEBI:57792"/>
    </ligand>
</feature>
<feature type="binding site" evidence="1">
    <location>
        <position position="231"/>
    </location>
    <ligand>
        <name>Mn(2+)</name>
        <dbReference type="ChEBI" id="CHEBI:29035"/>
    </ligand>
</feature>
<protein>
    <recommendedName>
        <fullName evidence="1">1-deoxy-D-xylulose 5-phosphate reductoisomerase</fullName>
        <shortName evidence="1">DXP reductoisomerase</shortName>
        <ecNumber evidence="1">1.1.1.267</ecNumber>
    </recommendedName>
    <alternativeName>
        <fullName evidence="1">1-deoxyxylulose-5-phosphate reductoisomerase</fullName>
    </alternativeName>
    <alternativeName>
        <fullName evidence="1">2-C-methyl-D-erythritol 4-phosphate synthase</fullName>
    </alternativeName>
</protein>
<name>DXR_YERP3</name>
<evidence type="ECO:0000255" key="1">
    <source>
        <dbReference type="HAMAP-Rule" id="MF_00183"/>
    </source>
</evidence>
<organism>
    <name type="scientific">Yersinia pseudotuberculosis serotype O:1b (strain IP 31758)</name>
    <dbReference type="NCBI Taxonomy" id="349747"/>
    <lineage>
        <taxon>Bacteria</taxon>
        <taxon>Pseudomonadati</taxon>
        <taxon>Pseudomonadota</taxon>
        <taxon>Gammaproteobacteria</taxon>
        <taxon>Enterobacterales</taxon>
        <taxon>Yersiniaceae</taxon>
        <taxon>Yersinia</taxon>
    </lineage>
</organism>